<name>LYSB_DROME</name>
<protein>
    <recommendedName>
        <fullName>Lysozyme B</fullName>
        <ecNumber>3.2.1.17</ecNumber>
    </recommendedName>
    <alternativeName>
        <fullName>1,4-beta-N-acetylmuramidase B</fullName>
    </alternativeName>
</protein>
<feature type="signal peptide" evidence="1">
    <location>
        <begin position="1"/>
        <end position="18"/>
    </location>
</feature>
<feature type="chain" id="PRO_0000018510" description="Lysozyme B">
    <location>
        <begin position="19"/>
        <end position="140"/>
    </location>
</feature>
<feature type="domain" description="C-type lysozyme" evidence="2">
    <location>
        <begin position="19"/>
        <end position="140"/>
    </location>
</feature>
<feature type="active site" evidence="2">
    <location>
        <position position="50"/>
    </location>
</feature>
<feature type="active site" evidence="2">
    <location>
        <position position="68"/>
    </location>
</feature>
<feature type="disulfide bond" evidence="2">
    <location>
        <begin position="24"/>
        <end position="139"/>
    </location>
</feature>
<feature type="disulfide bond" evidence="2">
    <location>
        <begin position="45"/>
        <end position="129"/>
    </location>
</feature>
<feature type="disulfide bond" evidence="2">
    <location>
        <begin position="80"/>
        <end position="96"/>
    </location>
</feature>
<feature type="disulfide bond" evidence="2">
    <location>
        <begin position="92"/>
        <end position="110"/>
    </location>
</feature>
<feature type="sequence conflict" description="In Ref. 1; CAA80227." evidence="3" ref="1">
    <original>LA</original>
    <variation>SG</variation>
    <location>
        <begin position="12"/>
        <end position="13"/>
    </location>
</feature>
<comment type="function">
    <text>Unlikely to play an active role in the humoral immune defense. May have a function in the digestion of bacteria in the food.</text>
</comment>
<comment type="catalytic activity">
    <reaction>
        <text>Hydrolysis of (1-&gt;4)-beta-linkages between N-acetylmuramic acid and N-acetyl-D-glucosamine residues in a peptidoglycan and between N-acetyl-D-glucosamine residues in chitodextrins.</text>
        <dbReference type="EC" id="3.2.1.17"/>
    </reaction>
</comment>
<comment type="tissue specificity">
    <text>Found in the midgut.</text>
</comment>
<comment type="developmental stage">
    <text>Maximal expression is found during the third larval instar, it drops to become undetectable in the late pupal stage. The expression in adults is similar to that of first and second larval instars.</text>
</comment>
<comment type="similarity">
    <text evidence="2">Belongs to the glycosyl hydrolase 22 family.</text>
</comment>
<dbReference type="EC" id="3.2.1.17"/>
<dbReference type="EMBL" id="Z22225">
    <property type="protein sequence ID" value="CAA80227.1"/>
    <property type="molecule type" value="Genomic_DNA"/>
</dbReference>
<dbReference type="EMBL" id="AE014296">
    <property type="protein sequence ID" value="AAF47448.1"/>
    <property type="molecule type" value="Genomic_DNA"/>
</dbReference>
<dbReference type="PIR" id="S41574">
    <property type="entry name" value="S41574"/>
</dbReference>
<dbReference type="RefSeq" id="NP_001261245.1">
    <property type="nucleotide sequence ID" value="NM_001274316.1"/>
</dbReference>
<dbReference type="RefSeq" id="NP_523882.1">
    <property type="nucleotide sequence ID" value="NM_079158.3"/>
</dbReference>
<dbReference type="SMR" id="Q08694"/>
<dbReference type="BioGRID" id="63671">
    <property type="interactions" value="2"/>
</dbReference>
<dbReference type="DIP" id="DIP-20169N"/>
<dbReference type="FunCoup" id="Q08694">
    <property type="interactions" value="45"/>
</dbReference>
<dbReference type="STRING" id="7227.FBpp0307718"/>
<dbReference type="CAZy" id="GH22">
    <property type="family name" value="Glycoside Hydrolase Family 22"/>
</dbReference>
<dbReference type="PaxDb" id="7227-FBpp0072524"/>
<dbReference type="DNASU" id="38125"/>
<dbReference type="EnsemblMetazoa" id="FBtr0072628">
    <property type="protein sequence ID" value="FBpp0072524"/>
    <property type="gene ID" value="FBgn0004425"/>
</dbReference>
<dbReference type="EnsemblMetazoa" id="FBtr0336738">
    <property type="protein sequence ID" value="FBpp0307718"/>
    <property type="gene ID" value="FBgn0004425"/>
</dbReference>
<dbReference type="GeneID" id="38125"/>
<dbReference type="KEGG" id="dme:Dmel_CG1179"/>
<dbReference type="AGR" id="FB:FBgn0004425"/>
<dbReference type="CTD" id="38125"/>
<dbReference type="FlyBase" id="FBgn0004425">
    <property type="gene designation" value="LysB"/>
</dbReference>
<dbReference type="VEuPathDB" id="VectorBase:FBgn0004425"/>
<dbReference type="eggNOG" id="ENOG502S1S1">
    <property type="taxonomic scope" value="Eukaryota"/>
</dbReference>
<dbReference type="GeneTree" id="ENSGT00940000166760"/>
<dbReference type="HOGENOM" id="CLU_111620_2_1_1"/>
<dbReference type="InParanoid" id="Q08694"/>
<dbReference type="OMA" id="GNGMNAW"/>
<dbReference type="OrthoDB" id="17373at2759"/>
<dbReference type="PhylomeDB" id="Q08694"/>
<dbReference type="Reactome" id="R-DME-5653890">
    <property type="pathway name" value="Lactose synthesis"/>
</dbReference>
<dbReference type="BioGRID-ORCS" id="38125">
    <property type="hits" value="0 hits in 3 CRISPR screens"/>
</dbReference>
<dbReference type="GenomeRNAi" id="38125"/>
<dbReference type="PRO" id="PR:Q08694"/>
<dbReference type="Proteomes" id="UP000000803">
    <property type="component" value="Chromosome 3L"/>
</dbReference>
<dbReference type="Bgee" id="FBgn0004425">
    <property type="expression patterns" value="Expressed in adult enterocyte in adult thorax and 12 other cell types or tissues"/>
</dbReference>
<dbReference type="ExpressionAtlas" id="Q08694">
    <property type="expression patterns" value="baseline and differential"/>
</dbReference>
<dbReference type="GO" id="GO:0005615">
    <property type="term" value="C:extracellular space"/>
    <property type="evidence" value="ECO:0000250"/>
    <property type="project" value="FlyBase"/>
</dbReference>
<dbReference type="GO" id="GO:0003796">
    <property type="term" value="F:lysozyme activity"/>
    <property type="evidence" value="ECO:0000250"/>
    <property type="project" value="FlyBase"/>
</dbReference>
<dbReference type="GO" id="GO:0050829">
    <property type="term" value="P:defense response to Gram-negative bacterium"/>
    <property type="evidence" value="ECO:0000250"/>
    <property type="project" value="FlyBase"/>
</dbReference>
<dbReference type="GO" id="GO:0031640">
    <property type="term" value="P:killing of cells of another organism"/>
    <property type="evidence" value="ECO:0007669"/>
    <property type="project" value="UniProtKB-KW"/>
</dbReference>
<dbReference type="CDD" id="cd16899">
    <property type="entry name" value="LYZ_C_invert"/>
    <property type="match status" value="1"/>
</dbReference>
<dbReference type="FunFam" id="1.10.530.10:FF:000001">
    <property type="entry name" value="Lysozyme C"/>
    <property type="match status" value="1"/>
</dbReference>
<dbReference type="Gene3D" id="1.10.530.10">
    <property type="match status" value="1"/>
</dbReference>
<dbReference type="InterPro" id="IPR001916">
    <property type="entry name" value="Glyco_hydro_22"/>
</dbReference>
<dbReference type="InterPro" id="IPR019799">
    <property type="entry name" value="Glyco_hydro_22_CS"/>
</dbReference>
<dbReference type="InterPro" id="IPR000974">
    <property type="entry name" value="Glyco_hydro_22_lys"/>
</dbReference>
<dbReference type="InterPro" id="IPR023346">
    <property type="entry name" value="Lysozyme-like_dom_sf"/>
</dbReference>
<dbReference type="PANTHER" id="PTHR11407:SF36">
    <property type="entry name" value="GEO02684P1-RELATED"/>
    <property type="match status" value="1"/>
</dbReference>
<dbReference type="PANTHER" id="PTHR11407">
    <property type="entry name" value="LYSOZYME C"/>
    <property type="match status" value="1"/>
</dbReference>
<dbReference type="Pfam" id="PF00062">
    <property type="entry name" value="Lys"/>
    <property type="match status" value="1"/>
</dbReference>
<dbReference type="PRINTS" id="PR00137">
    <property type="entry name" value="LYSOZYME"/>
</dbReference>
<dbReference type="PRINTS" id="PR00135">
    <property type="entry name" value="LYZLACT"/>
</dbReference>
<dbReference type="SMART" id="SM00263">
    <property type="entry name" value="LYZ1"/>
    <property type="match status" value="1"/>
</dbReference>
<dbReference type="SUPFAM" id="SSF53955">
    <property type="entry name" value="Lysozyme-like"/>
    <property type="match status" value="1"/>
</dbReference>
<dbReference type="PROSITE" id="PS00128">
    <property type="entry name" value="GLYCOSYL_HYDROL_F22_1"/>
    <property type="match status" value="1"/>
</dbReference>
<dbReference type="PROSITE" id="PS51348">
    <property type="entry name" value="GLYCOSYL_HYDROL_F22_2"/>
    <property type="match status" value="1"/>
</dbReference>
<gene>
    <name type="primary">LysB</name>
    <name type="ORF">CG1179</name>
</gene>
<proteinExistence type="evidence at transcript level"/>
<reference key="1">
    <citation type="journal article" date="1994" name="Mol. Gen. Genet.">
        <title>The lysozyme locus in Drosophila melanogaster: an expanded gene family adapted for expression in the digestive tract.</title>
        <authorList>
            <person name="Daffre S."/>
            <person name="Kylsten P."/>
            <person name="Samakovlis C."/>
            <person name="Hultmark D."/>
        </authorList>
    </citation>
    <scope>NUCLEOTIDE SEQUENCE [GENOMIC DNA]</scope>
    <source>
        <strain>Canton-S</strain>
    </source>
</reference>
<reference key="2">
    <citation type="journal article" date="2000" name="Science">
        <title>The genome sequence of Drosophila melanogaster.</title>
        <authorList>
            <person name="Adams M.D."/>
            <person name="Celniker S.E."/>
            <person name="Holt R.A."/>
            <person name="Evans C.A."/>
            <person name="Gocayne J.D."/>
            <person name="Amanatides P.G."/>
            <person name="Scherer S.E."/>
            <person name="Li P.W."/>
            <person name="Hoskins R.A."/>
            <person name="Galle R.F."/>
            <person name="George R.A."/>
            <person name="Lewis S.E."/>
            <person name="Richards S."/>
            <person name="Ashburner M."/>
            <person name="Henderson S.N."/>
            <person name="Sutton G.G."/>
            <person name="Wortman J.R."/>
            <person name="Yandell M.D."/>
            <person name="Zhang Q."/>
            <person name="Chen L.X."/>
            <person name="Brandon R.C."/>
            <person name="Rogers Y.-H.C."/>
            <person name="Blazej R.G."/>
            <person name="Champe M."/>
            <person name="Pfeiffer B.D."/>
            <person name="Wan K.H."/>
            <person name="Doyle C."/>
            <person name="Baxter E.G."/>
            <person name="Helt G."/>
            <person name="Nelson C.R."/>
            <person name="Miklos G.L.G."/>
            <person name="Abril J.F."/>
            <person name="Agbayani A."/>
            <person name="An H.-J."/>
            <person name="Andrews-Pfannkoch C."/>
            <person name="Baldwin D."/>
            <person name="Ballew R.M."/>
            <person name="Basu A."/>
            <person name="Baxendale J."/>
            <person name="Bayraktaroglu L."/>
            <person name="Beasley E.M."/>
            <person name="Beeson K.Y."/>
            <person name="Benos P.V."/>
            <person name="Berman B.P."/>
            <person name="Bhandari D."/>
            <person name="Bolshakov S."/>
            <person name="Borkova D."/>
            <person name="Botchan M.R."/>
            <person name="Bouck J."/>
            <person name="Brokstein P."/>
            <person name="Brottier P."/>
            <person name="Burtis K.C."/>
            <person name="Busam D.A."/>
            <person name="Butler H."/>
            <person name="Cadieu E."/>
            <person name="Center A."/>
            <person name="Chandra I."/>
            <person name="Cherry J.M."/>
            <person name="Cawley S."/>
            <person name="Dahlke C."/>
            <person name="Davenport L.B."/>
            <person name="Davies P."/>
            <person name="de Pablos B."/>
            <person name="Delcher A."/>
            <person name="Deng Z."/>
            <person name="Mays A.D."/>
            <person name="Dew I."/>
            <person name="Dietz S.M."/>
            <person name="Dodson K."/>
            <person name="Doup L.E."/>
            <person name="Downes M."/>
            <person name="Dugan-Rocha S."/>
            <person name="Dunkov B.C."/>
            <person name="Dunn P."/>
            <person name="Durbin K.J."/>
            <person name="Evangelista C.C."/>
            <person name="Ferraz C."/>
            <person name="Ferriera S."/>
            <person name="Fleischmann W."/>
            <person name="Fosler C."/>
            <person name="Gabrielian A.E."/>
            <person name="Garg N.S."/>
            <person name="Gelbart W.M."/>
            <person name="Glasser K."/>
            <person name="Glodek A."/>
            <person name="Gong F."/>
            <person name="Gorrell J.H."/>
            <person name="Gu Z."/>
            <person name="Guan P."/>
            <person name="Harris M."/>
            <person name="Harris N.L."/>
            <person name="Harvey D.A."/>
            <person name="Heiman T.J."/>
            <person name="Hernandez J.R."/>
            <person name="Houck J."/>
            <person name="Hostin D."/>
            <person name="Houston K.A."/>
            <person name="Howland T.J."/>
            <person name="Wei M.-H."/>
            <person name="Ibegwam C."/>
            <person name="Jalali M."/>
            <person name="Kalush F."/>
            <person name="Karpen G.H."/>
            <person name="Ke Z."/>
            <person name="Kennison J.A."/>
            <person name="Ketchum K.A."/>
            <person name="Kimmel B.E."/>
            <person name="Kodira C.D."/>
            <person name="Kraft C.L."/>
            <person name="Kravitz S."/>
            <person name="Kulp D."/>
            <person name="Lai Z."/>
            <person name="Lasko P."/>
            <person name="Lei Y."/>
            <person name="Levitsky A.A."/>
            <person name="Li J.H."/>
            <person name="Li Z."/>
            <person name="Liang Y."/>
            <person name="Lin X."/>
            <person name="Liu X."/>
            <person name="Mattei B."/>
            <person name="McIntosh T.C."/>
            <person name="McLeod M.P."/>
            <person name="McPherson D."/>
            <person name="Merkulov G."/>
            <person name="Milshina N.V."/>
            <person name="Mobarry C."/>
            <person name="Morris J."/>
            <person name="Moshrefi A."/>
            <person name="Mount S.M."/>
            <person name="Moy M."/>
            <person name="Murphy B."/>
            <person name="Murphy L."/>
            <person name="Muzny D.M."/>
            <person name="Nelson D.L."/>
            <person name="Nelson D.R."/>
            <person name="Nelson K.A."/>
            <person name="Nixon K."/>
            <person name="Nusskern D.R."/>
            <person name="Pacleb J.M."/>
            <person name="Palazzolo M."/>
            <person name="Pittman G.S."/>
            <person name="Pan S."/>
            <person name="Pollard J."/>
            <person name="Puri V."/>
            <person name="Reese M.G."/>
            <person name="Reinert K."/>
            <person name="Remington K."/>
            <person name="Saunders R.D.C."/>
            <person name="Scheeler F."/>
            <person name="Shen H."/>
            <person name="Shue B.C."/>
            <person name="Siden-Kiamos I."/>
            <person name="Simpson M."/>
            <person name="Skupski M.P."/>
            <person name="Smith T.J."/>
            <person name="Spier E."/>
            <person name="Spradling A.C."/>
            <person name="Stapleton M."/>
            <person name="Strong R."/>
            <person name="Sun E."/>
            <person name="Svirskas R."/>
            <person name="Tector C."/>
            <person name="Turner R."/>
            <person name="Venter E."/>
            <person name="Wang A.H."/>
            <person name="Wang X."/>
            <person name="Wang Z.-Y."/>
            <person name="Wassarman D.A."/>
            <person name="Weinstock G.M."/>
            <person name="Weissenbach J."/>
            <person name="Williams S.M."/>
            <person name="Woodage T."/>
            <person name="Worley K.C."/>
            <person name="Wu D."/>
            <person name="Yang S."/>
            <person name="Yao Q.A."/>
            <person name="Ye J."/>
            <person name="Yeh R.-F."/>
            <person name="Zaveri J.S."/>
            <person name="Zhan M."/>
            <person name="Zhang G."/>
            <person name="Zhao Q."/>
            <person name="Zheng L."/>
            <person name="Zheng X.H."/>
            <person name="Zhong F.N."/>
            <person name="Zhong W."/>
            <person name="Zhou X."/>
            <person name="Zhu S.C."/>
            <person name="Zhu X."/>
            <person name="Smith H.O."/>
            <person name="Gibbs R.A."/>
            <person name="Myers E.W."/>
            <person name="Rubin G.M."/>
            <person name="Venter J.C."/>
        </authorList>
    </citation>
    <scope>NUCLEOTIDE SEQUENCE [LARGE SCALE GENOMIC DNA]</scope>
    <source>
        <strain>Berkeley</strain>
    </source>
</reference>
<reference key="3">
    <citation type="journal article" date="2002" name="Genome Biol.">
        <title>Annotation of the Drosophila melanogaster euchromatic genome: a systematic review.</title>
        <authorList>
            <person name="Misra S."/>
            <person name="Crosby M.A."/>
            <person name="Mungall C.J."/>
            <person name="Matthews B.B."/>
            <person name="Campbell K.S."/>
            <person name="Hradecky P."/>
            <person name="Huang Y."/>
            <person name="Kaminker J.S."/>
            <person name="Millburn G.H."/>
            <person name="Prochnik S.E."/>
            <person name="Smith C.D."/>
            <person name="Tupy J.L."/>
            <person name="Whitfield E.J."/>
            <person name="Bayraktaroglu L."/>
            <person name="Berman B.P."/>
            <person name="Bettencourt B.R."/>
            <person name="Celniker S.E."/>
            <person name="de Grey A.D.N.J."/>
            <person name="Drysdale R.A."/>
            <person name="Harris N.L."/>
            <person name="Richter J."/>
            <person name="Russo S."/>
            <person name="Schroeder A.J."/>
            <person name="Shu S.Q."/>
            <person name="Stapleton M."/>
            <person name="Yamada C."/>
            <person name="Ashburner M."/>
            <person name="Gelbart W.M."/>
            <person name="Rubin G.M."/>
            <person name="Lewis S.E."/>
        </authorList>
    </citation>
    <scope>GENOME REANNOTATION</scope>
    <source>
        <strain>Berkeley</strain>
    </source>
</reference>
<organism>
    <name type="scientific">Drosophila melanogaster</name>
    <name type="common">Fruit fly</name>
    <dbReference type="NCBI Taxonomy" id="7227"/>
    <lineage>
        <taxon>Eukaryota</taxon>
        <taxon>Metazoa</taxon>
        <taxon>Ecdysozoa</taxon>
        <taxon>Arthropoda</taxon>
        <taxon>Hexapoda</taxon>
        <taxon>Insecta</taxon>
        <taxon>Pterygota</taxon>
        <taxon>Neoptera</taxon>
        <taxon>Endopterygota</taxon>
        <taxon>Diptera</taxon>
        <taxon>Brachycera</taxon>
        <taxon>Muscomorpha</taxon>
        <taxon>Ephydroidea</taxon>
        <taxon>Drosophilidae</taxon>
        <taxon>Drosophila</taxon>
        <taxon>Sophophora</taxon>
    </lineage>
</organism>
<evidence type="ECO:0000250" key="1"/>
<evidence type="ECO:0000255" key="2">
    <source>
        <dbReference type="PROSITE-ProRule" id="PRU00680"/>
    </source>
</evidence>
<evidence type="ECO:0000305" key="3"/>
<sequence>MKAFIVLVALALAAPALGRTMDRCSLAREMSNLGVPRDQLARWACIAEHESSYRTGVVGPENYNGSNDYGIFQINDYYWCAPPSGRFSYNECGLSCNALLTDDITHSVRCAQKVLSQQGWSAWSTWHYCSGWLPSIDDCF</sequence>
<keyword id="KW-0929">Antimicrobial</keyword>
<keyword id="KW-0081">Bacteriolytic enzyme</keyword>
<keyword id="KW-1015">Disulfide bond</keyword>
<keyword id="KW-0326">Glycosidase</keyword>
<keyword id="KW-0378">Hydrolase</keyword>
<keyword id="KW-1185">Reference proteome</keyword>
<keyword id="KW-0732">Signal</keyword>
<accession>Q08694</accession>
<accession>P37158</accession>
<accession>Q9W0J8</accession>